<dbReference type="EC" id="6.3.1.5" evidence="1"/>
<dbReference type="EMBL" id="CP000438">
    <property type="protein sequence ID" value="ABJ14305.1"/>
    <property type="molecule type" value="Genomic_DNA"/>
</dbReference>
<dbReference type="RefSeq" id="WP_003109458.1">
    <property type="nucleotide sequence ID" value="NZ_CP034244.1"/>
</dbReference>
<dbReference type="SMR" id="Q02F98"/>
<dbReference type="KEGG" id="pau:PA14_64980"/>
<dbReference type="PseudoCAP" id="PA14_64980"/>
<dbReference type="HOGENOM" id="CLU_059327_3_0_6"/>
<dbReference type="BioCyc" id="PAER208963:G1G74-5492-MONOMER"/>
<dbReference type="UniPathway" id="UPA00253">
    <property type="reaction ID" value="UER00333"/>
</dbReference>
<dbReference type="Proteomes" id="UP000000653">
    <property type="component" value="Chromosome"/>
</dbReference>
<dbReference type="GO" id="GO:0005737">
    <property type="term" value="C:cytoplasm"/>
    <property type="evidence" value="ECO:0007669"/>
    <property type="project" value="InterPro"/>
</dbReference>
<dbReference type="GO" id="GO:0005524">
    <property type="term" value="F:ATP binding"/>
    <property type="evidence" value="ECO:0007669"/>
    <property type="project" value="UniProtKB-UniRule"/>
</dbReference>
<dbReference type="GO" id="GO:0004359">
    <property type="term" value="F:glutaminase activity"/>
    <property type="evidence" value="ECO:0007669"/>
    <property type="project" value="InterPro"/>
</dbReference>
<dbReference type="GO" id="GO:0046872">
    <property type="term" value="F:metal ion binding"/>
    <property type="evidence" value="ECO:0007669"/>
    <property type="project" value="UniProtKB-KW"/>
</dbReference>
<dbReference type="GO" id="GO:0003952">
    <property type="term" value="F:NAD+ synthase (glutamine-hydrolyzing) activity"/>
    <property type="evidence" value="ECO:0007669"/>
    <property type="project" value="InterPro"/>
</dbReference>
<dbReference type="GO" id="GO:0008795">
    <property type="term" value="F:NAD+ synthase activity"/>
    <property type="evidence" value="ECO:0007669"/>
    <property type="project" value="UniProtKB-UniRule"/>
</dbReference>
<dbReference type="GO" id="GO:0009435">
    <property type="term" value="P:NAD biosynthetic process"/>
    <property type="evidence" value="ECO:0007669"/>
    <property type="project" value="UniProtKB-UniRule"/>
</dbReference>
<dbReference type="CDD" id="cd00553">
    <property type="entry name" value="NAD_synthase"/>
    <property type="match status" value="1"/>
</dbReference>
<dbReference type="FunFam" id="3.40.50.620:FF:000253">
    <property type="entry name" value="NH(3)-dependent NAD(+) synthetase"/>
    <property type="match status" value="1"/>
</dbReference>
<dbReference type="Gene3D" id="3.40.50.620">
    <property type="entry name" value="HUPs"/>
    <property type="match status" value="1"/>
</dbReference>
<dbReference type="HAMAP" id="MF_00193">
    <property type="entry name" value="NadE_ammonia_dep"/>
    <property type="match status" value="1"/>
</dbReference>
<dbReference type="InterPro" id="IPR022310">
    <property type="entry name" value="NAD/GMP_synthase"/>
</dbReference>
<dbReference type="InterPro" id="IPR003694">
    <property type="entry name" value="NAD_synthase"/>
</dbReference>
<dbReference type="InterPro" id="IPR022926">
    <property type="entry name" value="NH(3)-dep_NAD(+)_synth"/>
</dbReference>
<dbReference type="InterPro" id="IPR014729">
    <property type="entry name" value="Rossmann-like_a/b/a_fold"/>
</dbReference>
<dbReference type="NCBIfam" id="TIGR00552">
    <property type="entry name" value="nadE"/>
    <property type="match status" value="1"/>
</dbReference>
<dbReference type="NCBIfam" id="NF001979">
    <property type="entry name" value="PRK00768.1"/>
    <property type="match status" value="1"/>
</dbReference>
<dbReference type="PANTHER" id="PTHR23090">
    <property type="entry name" value="NH 3 /GLUTAMINE-DEPENDENT NAD + SYNTHETASE"/>
    <property type="match status" value="1"/>
</dbReference>
<dbReference type="PANTHER" id="PTHR23090:SF7">
    <property type="entry name" value="NH(3)-DEPENDENT NAD(+) SYNTHETASE"/>
    <property type="match status" value="1"/>
</dbReference>
<dbReference type="Pfam" id="PF02540">
    <property type="entry name" value="NAD_synthase"/>
    <property type="match status" value="1"/>
</dbReference>
<dbReference type="SUPFAM" id="SSF52402">
    <property type="entry name" value="Adenine nucleotide alpha hydrolases-like"/>
    <property type="match status" value="1"/>
</dbReference>
<gene>
    <name evidence="1" type="primary">nadE</name>
    <name type="ordered locus">PA14_64980</name>
</gene>
<keyword id="KW-0067">ATP-binding</keyword>
<keyword id="KW-0436">Ligase</keyword>
<keyword id="KW-0460">Magnesium</keyword>
<keyword id="KW-0479">Metal-binding</keyword>
<keyword id="KW-0520">NAD</keyword>
<keyword id="KW-0547">Nucleotide-binding</keyword>
<accession>Q02F98</accession>
<proteinExistence type="inferred from homology"/>
<sequence length="275" mass="29681">MQQIQRDIAQALQVQPPFQSEADVQAQIARRIAFIQQCLKDAGLKTLVLGISGGVDSLTAGLLAQRAVEQLREQTGDQAYRFIAVRLPYQVQQDEADAQASLATIRADEEQTVNIGPSVKALAEQLEALEGLEPAKSDFVIGNIKARIRMVAQYAIAGARGGLVIGTDHAAEAVMGFFTKFGDGACDLAPLSGLAKHQVRALARALGAPENLVEKIPTADLEDLRPGHPDEASHGVTYAEIDAFLHGQPLREEAARVIVDTYHKTQHKRELPKAP</sequence>
<organism>
    <name type="scientific">Pseudomonas aeruginosa (strain UCBPP-PA14)</name>
    <dbReference type="NCBI Taxonomy" id="208963"/>
    <lineage>
        <taxon>Bacteria</taxon>
        <taxon>Pseudomonadati</taxon>
        <taxon>Pseudomonadota</taxon>
        <taxon>Gammaproteobacteria</taxon>
        <taxon>Pseudomonadales</taxon>
        <taxon>Pseudomonadaceae</taxon>
        <taxon>Pseudomonas</taxon>
    </lineage>
</organism>
<reference key="1">
    <citation type="journal article" date="2006" name="Genome Biol.">
        <title>Genomic analysis reveals that Pseudomonas aeruginosa virulence is combinatorial.</title>
        <authorList>
            <person name="Lee D.G."/>
            <person name="Urbach J.M."/>
            <person name="Wu G."/>
            <person name="Liberati N.T."/>
            <person name="Feinbaum R.L."/>
            <person name="Miyata S."/>
            <person name="Diggins L.T."/>
            <person name="He J."/>
            <person name="Saucier M."/>
            <person name="Deziel E."/>
            <person name="Friedman L."/>
            <person name="Li L."/>
            <person name="Grills G."/>
            <person name="Montgomery K."/>
            <person name="Kucherlapati R."/>
            <person name="Rahme L.G."/>
            <person name="Ausubel F.M."/>
        </authorList>
    </citation>
    <scope>NUCLEOTIDE SEQUENCE [LARGE SCALE GENOMIC DNA]</scope>
    <source>
        <strain>UCBPP-PA14</strain>
    </source>
</reference>
<protein>
    <recommendedName>
        <fullName evidence="1">NH(3)-dependent NAD(+) synthetase</fullName>
        <ecNumber evidence="1">6.3.1.5</ecNumber>
    </recommendedName>
</protein>
<comment type="function">
    <text evidence="1">Catalyzes the ATP-dependent amidation of deamido-NAD to form NAD. Uses ammonia as a nitrogen source.</text>
</comment>
<comment type="catalytic activity">
    <reaction evidence="1">
        <text>deamido-NAD(+) + NH4(+) + ATP = AMP + diphosphate + NAD(+) + H(+)</text>
        <dbReference type="Rhea" id="RHEA:21188"/>
        <dbReference type="ChEBI" id="CHEBI:15378"/>
        <dbReference type="ChEBI" id="CHEBI:28938"/>
        <dbReference type="ChEBI" id="CHEBI:30616"/>
        <dbReference type="ChEBI" id="CHEBI:33019"/>
        <dbReference type="ChEBI" id="CHEBI:57540"/>
        <dbReference type="ChEBI" id="CHEBI:58437"/>
        <dbReference type="ChEBI" id="CHEBI:456215"/>
        <dbReference type="EC" id="6.3.1.5"/>
    </reaction>
</comment>
<comment type="pathway">
    <text evidence="1">Cofactor biosynthesis; NAD(+) biosynthesis; NAD(+) from deamido-NAD(+) (ammonia route): step 1/1.</text>
</comment>
<comment type="subunit">
    <text evidence="1">Homodimer.</text>
</comment>
<comment type="similarity">
    <text evidence="1">Belongs to the NAD synthetase family.</text>
</comment>
<feature type="chain" id="PRO_1000077582" description="NH(3)-dependent NAD(+) synthetase">
    <location>
        <begin position="1"/>
        <end position="275"/>
    </location>
</feature>
<feature type="binding site" evidence="1">
    <location>
        <begin position="50"/>
        <end position="57"/>
    </location>
    <ligand>
        <name>ATP</name>
        <dbReference type="ChEBI" id="CHEBI:30616"/>
    </ligand>
</feature>
<feature type="binding site" evidence="1">
    <location>
        <position position="56"/>
    </location>
    <ligand>
        <name>Mg(2+)</name>
        <dbReference type="ChEBI" id="CHEBI:18420"/>
    </ligand>
</feature>
<feature type="binding site" evidence="1">
    <location>
        <position position="147"/>
    </location>
    <ligand>
        <name>deamido-NAD(+)</name>
        <dbReference type="ChEBI" id="CHEBI:58437"/>
    </ligand>
</feature>
<feature type="binding site" evidence="1">
    <location>
        <position position="167"/>
    </location>
    <ligand>
        <name>ATP</name>
        <dbReference type="ChEBI" id="CHEBI:30616"/>
    </ligand>
</feature>
<feature type="binding site" evidence="1">
    <location>
        <position position="172"/>
    </location>
    <ligand>
        <name>Mg(2+)</name>
        <dbReference type="ChEBI" id="CHEBI:18420"/>
    </ligand>
</feature>
<feature type="binding site" evidence="1">
    <location>
        <position position="180"/>
    </location>
    <ligand>
        <name>deamido-NAD(+)</name>
        <dbReference type="ChEBI" id="CHEBI:58437"/>
    </ligand>
</feature>
<feature type="binding site" evidence="1">
    <location>
        <position position="187"/>
    </location>
    <ligand>
        <name>deamido-NAD(+)</name>
        <dbReference type="ChEBI" id="CHEBI:58437"/>
    </ligand>
</feature>
<feature type="binding site" evidence="1">
    <location>
        <position position="196"/>
    </location>
    <ligand>
        <name>ATP</name>
        <dbReference type="ChEBI" id="CHEBI:30616"/>
    </ligand>
</feature>
<feature type="binding site" evidence="1">
    <location>
        <position position="218"/>
    </location>
    <ligand>
        <name>ATP</name>
        <dbReference type="ChEBI" id="CHEBI:30616"/>
    </ligand>
</feature>
<feature type="binding site" evidence="1">
    <location>
        <begin position="267"/>
        <end position="268"/>
    </location>
    <ligand>
        <name>deamido-NAD(+)</name>
        <dbReference type="ChEBI" id="CHEBI:58437"/>
    </ligand>
</feature>
<name>NADE_PSEAB</name>
<evidence type="ECO:0000255" key="1">
    <source>
        <dbReference type="HAMAP-Rule" id="MF_00193"/>
    </source>
</evidence>